<reference key="1">
    <citation type="journal article" date="2007" name="PLoS ONE">
        <title>Complete genomic characterization of a pathogenic A.II strain of Francisella tularensis subspecies tularensis.</title>
        <authorList>
            <person name="Beckstrom-Sternberg S.M."/>
            <person name="Auerbach R.K."/>
            <person name="Godbole S."/>
            <person name="Pearson J.V."/>
            <person name="Beckstrom-Sternberg J.S."/>
            <person name="Deng Z."/>
            <person name="Munk C."/>
            <person name="Kubota K."/>
            <person name="Zhou Y."/>
            <person name="Bruce D."/>
            <person name="Noronha J."/>
            <person name="Scheuermann R.H."/>
            <person name="Wang A."/>
            <person name="Wei X."/>
            <person name="Wang J."/>
            <person name="Hao J."/>
            <person name="Wagner D.M."/>
            <person name="Brettin T.S."/>
            <person name="Brown N."/>
            <person name="Gilna P."/>
            <person name="Keim P.S."/>
        </authorList>
    </citation>
    <scope>NUCLEOTIDE SEQUENCE [LARGE SCALE GENOMIC DNA]</scope>
    <source>
        <strain>WY96-3418</strain>
    </source>
</reference>
<comment type="function">
    <text evidence="1">Tetrapolymerization of the monopyrrole PBG into the hydroxymethylbilane pre-uroporphyrinogen in several discrete steps.</text>
</comment>
<comment type="catalytic activity">
    <reaction evidence="1">
        <text>4 porphobilinogen + H2O = hydroxymethylbilane + 4 NH4(+)</text>
        <dbReference type="Rhea" id="RHEA:13185"/>
        <dbReference type="ChEBI" id="CHEBI:15377"/>
        <dbReference type="ChEBI" id="CHEBI:28938"/>
        <dbReference type="ChEBI" id="CHEBI:57845"/>
        <dbReference type="ChEBI" id="CHEBI:58126"/>
        <dbReference type="EC" id="2.5.1.61"/>
    </reaction>
</comment>
<comment type="cofactor">
    <cofactor evidence="1">
        <name>dipyrromethane</name>
        <dbReference type="ChEBI" id="CHEBI:60342"/>
    </cofactor>
    <text evidence="1">Binds 1 dipyrromethane group covalently.</text>
</comment>
<comment type="pathway">
    <text evidence="1">Porphyrin-containing compound metabolism; protoporphyrin-IX biosynthesis; coproporphyrinogen-III from 5-aminolevulinate: step 2/4.</text>
</comment>
<comment type="subunit">
    <text evidence="1">Monomer.</text>
</comment>
<comment type="miscellaneous">
    <text evidence="1">The porphobilinogen subunits are added to the dipyrromethane group.</text>
</comment>
<comment type="similarity">
    <text evidence="1">Belongs to the HMBS family.</text>
</comment>
<protein>
    <recommendedName>
        <fullName evidence="1">Porphobilinogen deaminase</fullName>
        <shortName evidence="1">PBG</shortName>
        <ecNumber evidence="1">2.5.1.61</ecNumber>
    </recommendedName>
    <alternativeName>
        <fullName evidence="1">Hydroxymethylbilane synthase</fullName>
        <shortName evidence="1">HMBS</shortName>
    </alternativeName>
    <alternativeName>
        <fullName evidence="1">Pre-uroporphyrinogen synthase</fullName>
    </alternativeName>
</protein>
<proteinExistence type="inferred from homology"/>
<keyword id="KW-0627">Porphyrin biosynthesis</keyword>
<keyword id="KW-0808">Transferase</keyword>
<accession>A4IZY4</accession>
<evidence type="ECO:0000255" key="1">
    <source>
        <dbReference type="HAMAP-Rule" id="MF_00260"/>
    </source>
</evidence>
<sequence>MKQITIASRESKLALWQTNFIKNRIQSELNIPCEISTMKTQGDIILDQPLNKIGGKALFMKELEVAMLSNKADIAVHSLKDVPYQLPQGFCLAGFMPREDPRDAFVSNKYNSIDDLPKGAVVGTSSLRRKAQLLHYRDDLEIRDLRGNIQTRLSKLDNGDYDAIILASAGLIRLELVERITQFIPVEISLPAVGQGIVVIEALERDNDLLEKIQKLNCRESSRVATAERAFNQELKGGCHVAIGAYAELDNNQITLMAMVASSDGKKILKRKMIGDDPTKLGKLLAQEMIALGAYKILES</sequence>
<dbReference type="EC" id="2.5.1.61" evidence="1"/>
<dbReference type="EMBL" id="CP000608">
    <property type="protein sequence ID" value="ABO47485.1"/>
    <property type="molecule type" value="Genomic_DNA"/>
</dbReference>
<dbReference type="RefSeq" id="WP_003027288.1">
    <property type="nucleotide sequence ID" value="NC_009257.1"/>
</dbReference>
<dbReference type="SMR" id="A4IZY4"/>
<dbReference type="KEGG" id="ftw:FTW_1818"/>
<dbReference type="HOGENOM" id="CLU_019704_0_2_6"/>
<dbReference type="UniPathway" id="UPA00251">
    <property type="reaction ID" value="UER00319"/>
</dbReference>
<dbReference type="GO" id="GO:0005737">
    <property type="term" value="C:cytoplasm"/>
    <property type="evidence" value="ECO:0007669"/>
    <property type="project" value="TreeGrafter"/>
</dbReference>
<dbReference type="GO" id="GO:0004418">
    <property type="term" value="F:hydroxymethylbilane synthase activity"/>
    <property type="evidence" value="ECO:0007669"/>
    <property type="project" value="UniProtKB-UniRule"/>
</dbReference>
<dbReference type="GO" id="GO:0006782">
    <property type="term" value="P:protoporphyrinogen IX biosynthetic process"/>
    <property type="evidence" value="ECO:0007669"/>
    <property type="project" value="UniProtKB-UniRule"/>
</dbReference>
<dbReference type="CDD" id="cd13646">
    <property type="entry name" value="PBP2_EcHMBS_like"/>
    <property type="match status" value="1"/>
</dbReference>
<dbReference type="FunFam" id="3.40.190.10:FF:000004">
    <property type="entry name" value="Porphobilinogen deaminase"/>
    <property type="match status" value="1"/>
</dbReference>
<dbReference type="FunFam" id="3.40.190.10:FF:000005">
    <property type="entry name" value="Porphobilinogen deaminase"/>
    <property type="match status" value="1"/>
</dbReference>
<dbReference type="Gene3D" id="3.40.190.10">
    <property type="entry name" value="Periplasmic binding protein-like II"/>
    <property type="match status" value="2"/>
</dbReference>
<dbReference type="Gene3D" id="3.30.160.40">
    <property type="entry name" value="Porphobilinogen deaminase, C-terminal domain"/>
    <property type="match status" value="1"/>
</dbReference>
<dbReference type="HAMAP" id="MF_00260">
    <property type="entry name" value="Porphobil_deam"/>
    <property type="match status" value="1"/>
</dbReference>
<dbReference type="InterPro" id="IPR000860">
    <property type="entry name" value="HemC"/>
</dbReference>
<dbReference type="InterPro" id="IPR022419">
    <property type="entry name" value="Porphobilin_deaminase_cofac_BS"/>
</dbReference>
<dbReference type="InterPro" id="IPR022417">
    <property type="entry name" value="Porphobilin_deaminase_N"/>
</dbReference>
<dbReference type="InterPro" id="IPR022418">
    <property type="entry name" value="Porphobilinogen_deaminase_C"/>
</dbReference>
<dbReference type="InterPro" id="IPR036803">
    <property type="entry name" value="Porphobilinogen_deaminase_C_sf"/>
</dbReference>
<dbReference type="NCBIfam" id="TIGR00212">
    <property type="entry name" value="hemC"/>
    <property type="match status" value="1"/>
</dbReference>
<dbReference type="PANTHER" id="PTHR11557">
    <property type="entry name" value="PORPHOBILINOGEN DEAMINASE"/>
    <property type="match status" value="1"/>
</dbReference>
<dbReference type="PANTHER" id="PTHR11557:SF0">
    <property type="entry name" value="PORPHOBILINOGEN DEAMINASE"/>
    <property type="match status" value="1"/>
</dbReference>
<dbReference type="Pfam" id="PF01379">
    <property type="entry name" value="Porphobil_deam"/>
    <property type="match status" value="1"/>
</dbReference>
<dbReference type="Pfam" id="PF03900">
    <property type="entry name" value="Porphobil_deamC"/>
    <property type="match status" value="1"/>
</dbReference>
<dbReference type="PIRSF" id="PIRSF001438">
    <property type="entry name" value="4pyrrol_synth_OHMeBilane_synth"/>
    <property type="match status" value="1"/>
</dbReference>
<dbReference type="PRINTS" id="PR00151">
    <property type="entry name" value="PORPHBDMNASE"/>
</dbReference>
<dbReference type="SUPFAM" id="SSF53850">
    <property type="entry name" value="Periplasmic binding protein-like II"/>
    <property type="match status" value="1"/>
</dbReference>
<dbReference type="SUPFAM" id="SSF54782">
    <property type="entry name" value="Porphobilinogen deaminase (hydroxymethylbilane synthase), C-terminal domain"/>
    <property type="match status" value="1"/>
</dbReference>
<dbReference type="PROSITE" id="PS00533">
    <property type="entry name" value="PORPHOBILINOGEN_DEAM"/>
    <property type="match status" value="1"/>
</dbReference>
<name>HEM3_FRATW</name>
<gene>
    <name evidence="1" type="primary">hemC</name>
    <name type="ordered locus">FTW_1818</name>
</gene>
<organism>
    <name type="scientific">Francisella tularensis subsp. tularensis (strain WY96-3418)</name>
    <dbReference type="NCBI Taxonomy" id="418136"/>
    <lineage>
        <taxon>Bacteria</taxon>
        <taxon>Pseudomonadati</taxon>
        <taxon>Pseudomonadota</taxon>
        <taxon>Gammaproteobacteria</taxon>
        <taxon>Thiotrichales</taxon>
        <taxon>Francisellaceae</taxon>
        <taxon>Francisella</taxon>
    </lineage>
</organism>
<feature type="chain" id="PRO_0000304241" description="Porphobilinogen deaminase">
    <location>
        <begin position="1"/>
        <end position="300"/>
    </location>
</feature>
<feature type="modified residue" description="S-(dipyrrolylmethanemethyl)cysteine" evidence="1">
    <location>
        <position position="239"/>
    </location>
</feature>